<reference key="1">
    <citation type="journal article" date="2001" name="Lancet">
        <title>Whole genome sequencing of meticillin-resistant Staphylococcus aureus.</title>
        <authorList>
            <person name="Kuroda M."/>
            <person name="Ohta T."/>
            <person name="Uchiyama I."/>
            <person name="Baba T."/>
            <person name="Yuzawa H."/>
            <person name="Kobayashi I."/>
            <person name="Cui L."/>
            <person name="Oguchi A."/>
            <person name="Aoki K."/>
            <person name="Nagai Y."/>
            <person name="Lian J.-Q."/>
            <person name="Ito T."/>
            <person name="Kanamori M."/>
            <person name="Matsumaru H."/>
            <person name="Maruyama A."/>
            <person name="Murakami H."/>
            <person name="Hosoyama A."/>
            <person name="Mizutani-Ui Y."/>
            <person name="Takahashi N.K."/>
            <person name="Sawano T."/>
            <person name="Inoue R."/>
            <person name="Kaito C."/>
            <person name="Sekimizu K."/>
            <person name="Hirakawa H."/>
            <person name="Kuhara S."/>
            <person name="Goto S."/>
            <person name="Yabuzaki J."/>
            <person name="Kanehisa M."/>
            <person name="Yamashita A."/>
            <person name="Oshima K."/>
            <person name="Furuya K."/>
            <person name="Yoshino C."/>
            <person name="Shiba T."/>
            <person name="Hattori M."/>
            <person name="Ogasawara N."/>
            <person name="Hayashi H."/>
            <person name="Hiramatsu K."/>
        </authorList>
    </citation>
    <scope>NUCLEOTIDE SEQUENCE [LARGE SCALE GENOMIC DNA]</scope>
    <source>
        <strain>Mu50 / ATCC 700699</strain>
    </source>
</reference>
<accession>P60284</accession>
<accession>Q99W64</accession>
<evidence type="ECO:0000255" key="1">
    <source>
        <dbReference type="HAMAP-Rule" id="MF_01322"/>
    </source>
</evidence>
<comment type="function">
    <text evidence="1">DNA-dependent RNA polymerase catalyzes the transcription of DNA into RNA using the four ribonucleoside triphosphates as substrates.</text>
</comment>
<comment type="catalytic activity">
    <reaction evidence="1">
        <text>RNA(n) + a ribonucleoside 5'-triphosphate = RNA(n+1) + diphosphate</text>
        <dbReference type="Rhea" id="RHEA:21248"/>
        <dbReference type="Rhea" id="RHEA-COMP:14527"/>
        <dbReference type="Rhea" id="RHEA-COMP:17342"/>
        <dbReference type="ChEBI" id="CHEBI:33019"/>
        <dbReference type="ChEBI" id="CHEBI:61557"/>
        <dbReference type="ChEBI" id="CHEBI:140395"/>
        <dbReference type="EC" id="2.7.7.6"/>
    </reaction>
</comment>
<comment type="cofactor">
    <cofactor evidence="1">
        <name>Mg(2+)</name>
        <dbReference type="ChEBI" id="CHEBI:18420"/>
    </cofactor>
    <text evidence="1">Binds 1 Mg(2+) ion per subunit.</text>
</comment>
<comment type="cofactor">
    <cofactor evidence="1">
        <name>Zn(2+)</name>
        <dbReference type="ChEBI" id="CHEBI:29105"/>
    </cofactor>
    <text evidence="1">Binds 2 Zn(2+) ions per subunit.</text>
</comment>
<comment type="subunit">
    <text evidence="1">The RNAP catalytic core consists of 2 alpha, 1 beta, 1 beta' and 1 omega subunit. When a sigma factor is associated with the core the holoenzyme is formed, which can initiate transcription.</text>
</comment>
<comment type="similarity">
    <text evidence="1">Belongs to the RNA polymerase beta' chain family.</text>
</comment>
<protein>
    <recommendedName>
        <fullName evidence="1">DNA-directed RNA polymerase subunit beta'</fullName>
        <shortName evidence="1">RNAP subunit beta'</shortName>
        <ecNumber evidence="1">2.7.7.6</ecNumber>
    </recommendedName>
    <alternativeName>
        <fullName evidence="1">RNA polymerase subunit beta'</fullName>
    </alternativeName>
    <alternativeName>
        <fullName evidence="1">Transcriptase subunit beta'</fullName>
    </alternativeName>
</protein>
<dbReference type="EC" id="2.7.7.6" evidence="1"/>
<dbReference type="EMBL" id="BA000017">
    <property type="protein sequence ID" value="BAB56705.1"/>
    <property type="molecule type" value="Genomic_DNA"/>
</dbReference>
<dbReference type="SMR" id="P60284"/>
<dbReference type="KEGG" id="sav:SAV0543"/>
<dbReference type="HOGENOM" id="CLU_000524_3_0_9"/>
<dbReference type="PhylomeDB" id="P60284"/>
<dbReference type="Proteomes" id="UP000002481">
    <property type="component" value="Chromosome"/>
</dbReference>
<dbReference type="GO" id="GO:0000428">
    <property type="term" value="C:DNA-directed RNA polymerase complex"/>
    <property type="evidence" value="ECO:0007669"/>
    <property type="project" value="UniProtKB-KW"/>
</dbReference>
<dbReference type="GO" id="GO:0003677">
    <property type="term" value="F:DNA binding"/>
    <property type="evidence" value="ECO:0007669"/>
    <property type="project" value="UniProtKB-UniRule"/>
</dbReference>
<dbReference type="GO" id="GO:0003899">
    <property type="term" value="F:DNA-directed RNA polymerase activity"/>
    <property type="evidence" value="ECO:0007669"/>
    <property type="project" value="UniProtKB-UniRule"/>
</dbReference>
<dbReference type="GO" id="GO:0000287">
    <property type="term" value="F:magnesium ion binding"/>
    <property type="evidence" value="ECO:0007669"/>
    <property type="project" value="UniProtKB-UniRule"/>
</dbReference>
<dbReference type="GO" id="GO:0008270">
    <property type="term" value="F:zinc ion binding"/>
    <property type="evidence" value="ECO:0007669"/>
    <property type="project" value="UniProtKB-UniRule"/>
</dbReference>
<dbReference type="GO" id="GO:0006351">
    <property type="term" value="P:DNA-templated transcription"/>
    <property type="evidence" value="ECO:0007669"/>
    <property type="project" value="UniProtKB-UniRule"/>
</dbReference>
<dbReference type="CDD" id="cd02655">
    <property type="entry name" value="RNAP_beta'_C"/>
    <property type="match status" value="1"/>
</dbReference>
<dbReference type="CDD" id="cd01609">
    <property type="entry name" value="RNAP_beta'_N"/>
    <property type="match status" value="1"/>
</dbReference>
<dbReference type="FunFam" id="1.10.132.30:FF:000003">
    <property type="entry name" value="DNA-directed RNA polymerase subunit beta"/>
    <property type="match status" value="1"/>
</dbReference>
<dbReference type="FunFam" id="1.10.150.390:FF:000002">
    <property type="entry name" value="DNA-directed RNA polymerase subunit beta"/>
    <property type="match status" value="1"/>
</dbReference>
<dbReference type="FunFam" id="4.10.860.120:FF:000001">
    <property type="entry name" value="DNA-directed RNA polymerase subunit beta"/>
    <property type="match status" value="1"/>
</dbReference>
<dbReference type="Gene3D" id="1.10.132.30">
    <property type="match status" value="1"/>
</dbReference>
<dbReference type="Gene3D" id="1.10.150.390">
    <property type="match status" value="1"/>
</dbReference>
<dbReference type="Gene3D" id="1.10.1790.20">
    <property type="match status" value="1"/>
</dbReference>
<dbReference type="Gene3D" id="1.10.40.90">
    <property type="match status" value="1"/>
</dbReference>
<dbReference type="Gene3D" id="2.40.40.20">
    <property type="match status" value="1"/>
</dbReference>
<dbReference type="Gene3D" id="2.40.50.100">
    <property type="match status" value="1"/>
</dbReference>
<dbReference type="Gene3D" id="4.10.860.120">
    <property type="entry name" value="RNA polymerase II, clamp domain"/>
    <property type="match status" value="1"/>
</dbReference>
<dbReference type="Gene3D" id="1.10.274.100">
    <property type="entry name" value="RNA polymerase Rpb1, domain 3"/>
    <property type="match status" value="1"/>
</dbReference>
<dbReference type="HAMAP" id="MF_01322">
    <property type="entry name" value="RNApol_bact_RpoC"/>
    <property type="match status" value="1"/>
</dbReference>
<dbReference type="InterPro" id="IPR045867">
    <property type="entry name" value="DNA-dir_RpoC_beta_prime"/>
</dbReference>
<dbReference type="InterPro" id="IPR012754">
    <property type="entry name" value="DNA-dir_RpoC_beta_prime_bact"/>
</dbReference>
<dbReference type="InterPro" id="IPR000722">
    <property type="entry name" value="RNA_pol_asu"/>
</dbReference>
<dbReference type="InterPro" id="IPR006592">
    <property type="entry name" value="RNA_pol_N"/>
</dbReference>
<dbReference type="InterPro" id="IPR007080">
    <property type="entry name" value="RNA_pol_Rpb1_1"/>
</dbReference>
<dbReference type="InterPro" id="IPR007066">
    <property type="entry name" value="RNA_pol_Rpb1_3"/>
</dbReference>
<dbReference type="InterPro" id="IPR042102">
    <property type="entry name" value="RNA_pol_Rpb1_3_sf"/>
</dbReference>
<dbReference type="InterPro" id="IPR007083">
    <property type="entry name" value="RNA_pol_Rpb1_4"/>
</dbReference>
<dbReference type="InterPro" id="IPR007081">
    <property type="entry name" value="RNA_pol_Rpb1_5"/>
</dbReference>
<dbReference type="InterPro" id="IPR044893">
    <property type="entry name" value="RNA_pol_Rpb1_clamp_domain"/>
</dbReference>
<dbReference type="InterPro" id="IPR038120">
    <property type="entry name" value="Rpb1_funnel_sf"/>
</dbReference>
<dbReference type="NCBIfam" id="TIGR02386">
    <property type="entry name" value="rpoC_TIGR"/>
    <property type="match status" value="1"/>
</dbReference>
<dbReference type="PANTHER" id="PTHR19376">
    <property type="entry name" value="DNA-DIRECTED RNA POLYMERASE"/>
    <property type="match status" value="1"/>
</dbReference>
<dbReference type="PANTHER" id="PTHR19376:SF54">
    <property type="entry name" value="DNA-DIRECTED RNA POLYMERASE SUBUNIT BETA"/>
    <property type="match status" value="1"/>
</dbReference>
<dbReference type="Pfam" id="PF04997">
    <property type="entry name" value="RNA_pol_Rpb1_1"/>
    <property type="match status" value="1"/>
</dbReference>
<dbReference type="Pfam" id="PF00623">
    <property type="entry name" value="RNA_pol_Rpb1_2"/>
    <property type="match status" value="1"/>
</dbReference>
<dbReference type="Pfam" id="PF04983">
    <property type="entry name" value="RNA_pol_Rpb1_3"/>
    <property type="match status" value="1"/>
</dbReference>
<dbReference type="Pfam" id="PF05000">
    <property type="entry name" value="RNA_pol_Rpb1_4"/>
    <property type="match status" value="1"/>
</dbReference>
<dbReference type="Pfam" id="PF04998">
    <property type="entry name" value="RNA_pol_Rpb1_5"/>
    <property type="match status" value="1"/>
</dbReference>
<dbReference type="SMART" id="SM00663">
    <property type="entry name" value="RPOLA_N"/>
    <property type="match status" value="1"/>
</dbReference>
<dbReference type="SUPFAM" id="SSF64484">
    <property type="entry name" value="beta and beta-prime subunits of DNA dependent RNA-polymerase"/>
    <property type="match status" value="1"/>
</dbReference>
<gene>
    <name evidence="1" type="primary">rpoC</name>
    <name type="ordered locus">SAV0543</name>
</gene>
<sequence length="1207" mass="135409">MIDVNNFHYMKIGLASPEKIRSWSFGEVKKPETINYRTLKPEKDGLFCERIFGPTKDWECSCGKYKRVRYKGMVCDRCGVEVTKSKVRRERMGHIELAAPVSHIWYFKGIPSRMGLLLDMSPRALEEVIYFASYVVVDPGPTGLEKKTLLSEAEFRDYYDKYPGQFVAKMGAEGIKDLLEEIDLDEELKLLRDELESATGQRLTRAIKRLEVVESFRNSGNKPSWMILDVLPIIPPEIRPMVQLDGGRFATSDLNDLYRRVINRNNRLKRLLDLGAPGIIVQNEKRMLQEAVDALIDNGRRGRPVTGPGNRPLKSLSHMLKGKQGRFRQNLLGKRVDYSGRSVIAVGPSLKMYQCGLPKEMALELFKPFVMKELVQREIATNIKNAKSKIERMDDEVWDVLEEVIREHPVLLNRAPTLHRLGIQAFEPTLVEGRAIRLHPLVTTAYNADFDGDQMAVHVPLSKEAQAEARMLMLAAQNILNPKDGKPVVTPSQDMVLGNYYLTLERKDAVNTGAIFNNTNEVLKAYANGFVHLHTRIGVHASSFNNPTFTEEQNKKILATSVGKIIFNEIIPDSFAYINEPTQENLERKTPNRYFIDPTTLGEGGLKEYFENEELIEPFNKKFLGNIIAEVFNRFSITDTSMMLDRMKDLGFKFSSKAGITVGVADIVVLPDKQQILDEHEKLVDRITKQFNRGLITEEERYNAVVEIWTDAKDQIQGELMQSLDKTNPIFMMSDSGARGNASNFTQLAGMRGLMAAPSGKIIELPITSSFREGLTVLEYFISTHGARKGLADTALKTADSGYLTRRLVDVAQDVIVREEDCGTDRGLLVSDIKEGTEMIEPFIERIEGRYSKETIRHPETDEIIIRPDELITPEIAKKITDAGIEQMYIRSAFTCNARHGVCEKCYGKNLATGEKVEVGEAVGTIAAQSIGEPGTQLTMRTFHTGGVAGSDITQGLPRIQEIFEARNPKGQAVITEIEGVVEDIKLAKDRQQEIVVKGANETRSYLASGTSRIIVEIGQPVQRGEVLTEGSIEPKNYLSVAGLNATESYLLKEVQKVYRMQGVEIDDKHVEVMVRQMLRKVRIIEAGDTKLLPGSLVDIHNFTDANREAFKHRKRPATAKPVLLGITKASLETESFLSAASFQETTRVLTDAAIKGKRDDLLGLKENVIIGKLIPAGTGMRRYSDVKYEKTAKPVAEVESQTEVTE</sequence>
<feature type="chain" id="PRO_0000067793" description="DNA-directed RNA polymerase subunit beta'">
    <location>
        <begin position="1"/>
        <end position="1207"/>
    </location>
</feature>
<feature type="binding site" evidence="1">
    <location>
        <position position="60"/>
    </location>
    <ligand>
        <name>Zn(2+)</name>
        <dbReference type="ChEBI" id="CHEBI:29105"/>
        <label>1</label>
    </ligand>
</feature>
<feature type="binding site" evidence="1">
    <location>
        <position position="62"/>
    </location>
    <ligand>
        <name>Zn(2+)</name>
        <dbReference type="ChEBI" id="CHEBI:29105"/>
        <label>1</label>
    </ligand>
</feature>
<feature type="binding site" evidence="1">
    <location>
        <position position="75"/>
    </location>
    <ligand>
        <name>Zn(2+)</name>
        <dbReference type="ChEBI" id="CHEBI:29105"/>
        <label>1</label>
    </ligand>
</feature>
<feature type="binding site" evidence="1">
    <location>
        <position position="78"/>
    </location>
    <ligand>
        <name>Zn(2+)</name>
        <dbReference type="ChEBI" id="CHEBI:29105"/>
        <label>1</label>
    </ligand>
</feature>
<feature type="binding site" evidence="1">
    <location>
        <position position="449"/>
    </location>
    <ligand>
        <name>Mg(2+)</name>
        <dbReference type="ChEBI" id="CHEBI:18420"/>
    </ligand>
</feature>
<feature type="binding site" evidence="1">
    <location>
        <position position="451"/>
    </location>
    <ligand>
        <name>Mg(2+)</name>
        <dbReference type="ChEBI" id="CHEBI:18420"/>
    </ligand>
</feature>
<feature type="binding site" evidence="1">
    <location>
        <position position="453"/>
    </location>
    <ligand>
        <name>Mg(2+)</name>
        <dbReference type="ChEBI" id="CHEBI:18420"/>
    </ligand>
</feature>
<feature type="binding site" evidence="1">
    <location>
        <position position="822"/>
    </location>
    <ligand>
        <name>Zn(2+)</name>
        <dbReference type="ChEBI" id="CHEBI:29105"/>
        <label>2</label>
    </ligand>
</feature>
<feature type="binding site" evidence="1">
    <location>
        <position position="896"/>
    </location>
    <ligand>
        <name>Zn(2+)</name>
        <dbReference type="ChEBI" id="CHEBI:29105"/>
        <label>2</label>
    </ligand>
</feature>
<feature type="binding site" evidence="1">
    <location>
        <position position="903"/>
    </location>
    <ligand>
        <name>Zn(2+)</name>
        <dbReference type="ChEBI" id="CHEBI:29105"/>
        <label>2</label>
    </ligand>
</feature>
<feature type="binding site" evidence="1">
    <location>
        <position position="906"/>
    </location>
    <ligand>
        <name>Zn(2+)</name>
        <dbReference type="ChEBI" id="CHEBI:29105"/>
        <label>2</label>
    </ligand>
</feature>
<organism>
    <name type="scientific">Staphylococcus aureus (strain Mu50 / ATCC 700699)</name>
    <dbReference type="NCBI Taxonomy" id="158878"/>
    <lineage>
        <taxon>Bacteria</taxon>
        <taxon>Bacillati</taxon>
        <taxon>Bacillota</taxon>
        <taxon>Bacilli</taxon>
        <taxon>Bacillales</taxon>
        <taxon>Staphylococcaceae</taxon>
        <taxon>Staphylococcus</taxon>
    </lineage>
</organism>
<keyword id="KW-0240">DNA-directed RNA polymerase</keyword>
<keyword id="KW-0460">Magnesium</keyword>
<keyword id="KW-0479">Metal-binding</keyword>
<keyword id="KW-0548">Nucleotidyltransferase</keyword>
<keyword id="KW-0804">Transcription</keyword>
<keyword id="KW-0808">Transferase</keyword>
<keyword id="KW-0862">Zinc</keyword>
<proteinExistence type="inferred from homology"/>
<name>RPOC_STAAM</name>